<organism>
    <name type="scientific">Escherichia coli (strain UTI89 / UPEC)</name>
    <dbReference type="NCBI Taxonomy" id="364106"/>
    <lineage>
        <taxon>Bacteria</taxon>
        <taxon>Pseudomonadati</taxon>
        <taxon>Pseudomonadota</taxon>
        <taxon>Gammaproteobacteria</taxon>
        <taxon>Enterobacterales</taxon>
        <taxon>Enterobacteriaceae</taxon>
        <taxon>Escherichia</taxon>
    </lineage>
</organism>
<gene>
    <name evidence="1" type="primary">deoB</name>
    <name type="ordered locus">UTI89_C5154</name>
</gene>
<keyword id="KW-0963">Cytoplasm</keyword>
<keyword id="KW-0413">Isomerase</keyword>
<keyword id="KW-0464">Manganese</keyword>
<keyword id="KW-0479">Metal-binding</keyword>
<protein>
    <recommendedName>
        <fullName evidence="1">Phosphopentomutase</fullName>
        <ecNumber evidence="1">5.4.2.7</ecNumber>
    </recommendedName>
    <alternativeName>
        <fullName evidence="1">Phosphodeoxyribomutase</fullName>
    </alternativeName>
</protein>
<evidence type="ECO:0000255" key="1">
    <source>
        <dbReference type="HAMAP-Rule" id="MF_00740"/>
    </source>
</evidence>
<reference key="1">
    <citation type="journal article" date="2006" name="Proc. Natl. Acad. Sci. U.S.A.">
        <title>Identification of genes subject to positive selection in uropathogenic strains of Escherichia coli: a comparative genomics approach.</title>
        <authorList>
            <person name="Chen S.L."/>
            <person name="Hung C.-S."/>
            <person name="Xu J."/>
            <person name="Reigstad C.S."/>
            <person name="Magrini V."/>
            <person name="Sabo A."/>
            <person name="Blasiar D."/>
            <person name="Bieri T."/>
            <person name="Meyer R.R."/>
            <person name="Ozersky P."/>
            <person name="Armstrong J.R."/>
            <person name="Fulton R.S."/>
            <person name="Latreille J.P."/>
            <person name="Spieth J."/>
            <person name="Hooton T.M."/>
            <person name="Mardis E.R."/>
            <person name="Hultgren S.J."/>
            <person name="Gordon J.I."/>
        </authorList>
    </citation>
    <scope>NUCLEOTIDE SEQUENCE [LARGE SCALE GENOMIC DNA]</scope>
    <source>
        <strain>UTI89 / UPEC</strain>
    </source>
</reference>
<dbReference type="EC" id="5.4.2.7" evidence="1"/>
<dbReference type="EMBL" id="CP000243">
    <property type="protein sequence ID" value="ABE10554.1"/>
    <property type="molecule type" value="Genomic_DNA"/>
</dbReference>
<dbReference type="RefSeq" id="WP_000816460.1">
    <property type="nucleotide sequence ID" value="NZ_CP064825.1"/>
</dbReference>
<dbReference type="SMR" id="Q1R260"/>
<dbReference type="GeneID" id="86944918"/>
<dbReference type="KEGG" id="eci:UTI89_C5154"/>
<dbReference type="HOGENOM" id="CLU_053861_0_0_6"/>
<dbReference type="UniPathway" id="UPA00002">
    <property type="reaction ID" value="UER00467"/>
</dbReference>
<dbReference type="Proteomes" id="UP000001952">
    <property type="component" value="Chromosome"/>
</dbReference>
<dbReference type="GO" id="GO:0005829">
    <property type="term" value="C:cytosol"/>
    <property type="evidence" value="ECO:0007669"/>
    <property type="project" value="TreeGrafter"/>
</dbReference>
<dbReference type="GO" id="GO:0000287">
    <property type="term" value="F:magnesium ion binding"/>
    <property type="evidence" value="ECO:0007669"/>
    <property type="project" value="InterPro"/>
</dbReference>
<dbReference type="GO" id="GO:0030145">
    <property type="term" value="F:manganese ion binding"/>
    <property type="evidence" value="ECO:0007669"/>
    <property type="project" value="UniProtKB-UniRule"/>
</dbReference>
<dbReference type="GO" id="GO:0008973">
    <property type="term" value="F:phosphopentomutase activity"/>
    <property type="evidence" value="ECO:0007669"/>
    <property type="project" value="UniProtKB-UniRule"/>
</dbReference>
<dbReference type="GO" id="GO:0006018">
    <property type="term" value="P:2-deoxyribose 1-phosphate catabolic process"/>
    <property type="evidence" value="ECO:0007669"/>
    <property type="project" value="UniProtKB-UniRule"/>
</dbReference>
<dbReference type="GO" id="GO:0006015">
    <property type="term" value="P:5-phosphoribose 1-diphosphate biosynthetic process"/>
    <property type="evidence" value="ECO:0007669"/>
    <property type="project" value="UniProtKB-UniPathway"/>
</dbReference>
<dbReference type="GO" id="GO:0043094">
    <property type="term" value="P:metabolic compound salvage"/>
    <property type="evidence" value="ECO:0007669"/>
    <property type="project" value="InterPro"/>
</dbReference>
<dbReference type="GO" id="GO:0009117">
    <property type="term" value="P:nucleotide metabolic process"/>
    <property type="evidence" value="ECO:0007669"/>
    <property type="project" value="InterPro"/>
</dbReference>
<dbReference type="CDD" id="cd16009">
    <property type="entry name" value="PPM"/>
    <property type="match status" value="1"/>
</dbReference>
<dbReference type="FunFam" id="3.30.70.1250:FF:000001">
    <property type="entry name" value="Phosphopentomutase"/>
    <property type="match status" value="1"/>
</dbReference>
<dbReference type="Gene3D" id="3.40.720.10">
    <property type="entry name" value="Alkaline Phosphatase, subunit A"/>
    <property type="match status" value="1"/>
</dbReference>
<dbReference type="Gene3D" id="3.30.70.1250">
    <property type="entry name" value="Phosphopentomutase"/>
    <property type="match status" value="1"/>
</dbReference>
<dbReference type="HAMAP" id="MF_00740">
    <property type="entry name" value="Phosphopentomut"/>
    <property type="match status" value="1"/>
</dbReference>
<dbReference type="InterPro" id="IPR017850">
    <property type="entry name" value="Alkaline_phosphatase_core_sf"/>
</dbReference>
<dbReference type="InterPro" id="IPR010045">
    <property type="entry name" value="DeoB"/>
</dbReference>
<dbReference type="InterPro" id="IPR006124">
    <property type="entry name" value="Metalloenzyme"/>
</dbReference>
<dbReference type="InterPro" id="IPR024052">
    <property type="entry name" value="Phosphopentomutase_DeoB_cap_sf"/>
</dbReference>
<dbReference type="NCBIfam" id="TIGR01696">
    <property type="entry name" value="deoB"/>
    <property type="match status" value="1"/>
</dbReference>
<dbReference type="NCBIfam" id="NF003766">
    <property type="entry name" value="PRK05362.1"/>
    <property type="match status" value="1"/>
</dbReference>
<dbReference type="PANTHER" id="PTHR21110">
    <property type="entry name" value="PHOSPHOPENTOMUTASE"/>
    <property type="match status" value="1"/>
</dbReference>
<dbReference type="PANTHER" id="PTHR21110:SF0">
    <property type="entry name" value="PHOSPHOPENTOMUTASE"/>
    <property type="match status" value="1"/>
</dbReference>
<dbReference type="Pfam" id="PF01676">
    <property type="entry name" value="Metalloenzyme"/>
    <property type="match status" value="1"/>
</dbReference>
<dbReference type="PIRSF" id="PIRSF001491">
    <property type="entry name" value="Ppentomutase"/>
    <property type="match status" value="1"/>
</dbReference>
<dbReference type="SUPFAM" id="SSF53649">
    <property type="entry name" value="Alkaline phosphatase-like"/>
    <property type="match status" value="1"/>
</dbReference>
<dbReference type="SUPFAM" id="SSF143856">
    <property type="entry name" value="DeoB insert domain-like"/>
    <property type="match status" value="1"/>
</dbReference>
<sequence>MKRAFIMVLDSFGIGATEDAERFGDVGADTLGHIAEACAKGEADHGRKGPLNLPNLTRLGLAKAHEGSTGFIPAGMDGNAEVIGAYAWAHEMSSGKDTPSGHWEIAGVPVLFEWGYFSDHENSFPQELLDKLVERANLPGYLGNCHSSGTVILDQLGEEHMKTGKPIFYTSADSVFQIACHEETFGLDKLYELCEIAREELTNGGYNIGRVIARPFIGDKAGNFQRTGNRHDLAVEPPAPTVLQKLVDEKHGQVVSVGKIADIYANCGITKKVKATGLDALFDATIKEMKEAGDNTIVFTNFVDFDSSWGHRRDVAGYAAGLELFDRRLPELMSLLRDDDILILTADHGCDPTWTGTDHTREHIPVLVYGPKVKPGSLGHRETFADIGQTLAKYFGTSDMEYGKAMF</sequence>
<proteinExistence type="inferred from homology"/>
<accession>Q1R260</accession>
<feature type="chain" id="PRO_0000258284" description="Phosphopentomutase">
    <location>
        <begin position="1"/>
        <end position="407"/>
    </location>
</feature>
<feature type="binding site" evidence="1">
    <location>
        <position position="10"/>
    </location>
    <ligand>
        <name>Mn(2+)</name>
        <dbReference type="ChEBI" id="CHEBI:29035"/>
        <label>1</label>
    </ligand>
</feature>
<feature type="binding site" evidence="1">
    <location>
        <position position="306"/>
    </location>
    <ligand>
        <name>Mn(2+)</name>
        <dbReference type="ChEBI" id="CHEBI:29035"/>
        <label>2</label>
    </ligand>
</feature>
<feature type="binding site" evidence="1">
    <location>
        <position position="311"/>
    </location>
    <ligand>
        <name>Mn(2+)</name>
        <dbReference type="ChEBI" id="CHEBI:29035"/>
        <label>2</label>
    </ligand>
</feature>
<feature type="binding site" evidence="1">
    <location>
        <position position="347"/>
    </location>
    <ligand>
        <name>Mn(2+)</name>
        <dbReference type="ChEBI" id="CHEBI:29035"/>
        <label>1</label>
    </ligand>
</feature>
<feature type="binding site" evidence="1">
    <location>
        <position position="348"/>
    </location>
    <ligand>
        <name>Mn(2+)</name>
        <dbReference type="ChEBI" id="CHEBI:29035"/>
        <label>1</label>
    </ligand>
</feature>
<feature type="binding site" evidence="1">
    <location>
        <position position="359"/>
    </location>
    <ligand>
        <name>Mn(2+)</name>
        <dbReference type="ChEBI" id="CHEBI:29035"/>
        <label>2</label>
    </ligand>
</feature>
<name>DEOB_ECOUT</name>
<comment type="function">
    <text evidence="1">Isomerase that catalyzes the conversion of deoxy-ribose 1-phosphate (dRib-1-P) and ribose 1-phosphate (Rib-1-P) to deoxy-ribose 5-phosphate (dRib-5-P) and ribose 5-phosphate (Rib-5-P), respectively.</text>
</comment>
<comment type="catalytic activity">
    <reaction evidence="1">
        <text>2-deoxy-alpha-D-ribose 1-phosphate = 2-deoxy-D-ribose 5-phosphate</text>
        <dbReference type="Rhea" id="RHEA:27658"/>
        <dbReference type="ChEBI" id="CHEBI:57259"/>
        <dbReference type="ChEBI" id="CHEBI:62877"/>
        <dbReference type="EC" id="5.4.2.7"/>
    </reaction>
</comment>
<comment type="catalytic activity">
    <reaction evidence="1">
        <text>alpha-D-ribose 1-phosphate = D-ribose 5-phosphate</text>
        <dbReference type="Rhea" id="RHEA:18793"/>
        <dbReference type="ChEBI" id="CHEBI:57720"/>
        <dbReference type="ChEBI" id="CHEBI:78346"/>
        <dbReference type="EC" id="5.4.2.7"/>
    </reaction>
</comment>
<comment type="cofactor">
    <cofactor evidence="1">
        <name>Mn(2+)</name>
        <dbReference type="ChEBI" id="CHEBI:29035"/>
    </cofactor>
    <text evidence="1">Binds 2 manganese ions.</text>
</comment>
<comment type="pathway">
    <text evidence="1">Carbohydrate degradation; 2-deoxy-D-ribose 1-phosphate degradation; D-glyceraldehyde 3-phosphate and acetaldehyde from 2-deoxy-alpha-D-ribose 1-phosphate: step 1/2.</text>
</comment>
<comment type="subcellular location">
    <subcellularLocation>
        <location evidence="1">Cytoplasm</location>
    </subcellularLocation>
</comment>
<comment type="similarity">
    <text evidence="1">Belongs to the phosphopentomutase family.</text>
</comment>